<feature type="chain" id="PRO_0000023151" description="Aspartate 1-decarboxylase beta chain" evidence="1">
    <location>
        <begin position="1"/>
        <end position="24"/>
    </location>
</feature>
<feature type="chain" id="PRO_0000023152" description="Aspartate 1-decarboxylase alpha chain" evidence="1">
    <location>
        <begin position="25"/>
        <end position="126"/>
    </location>
</feature>
<feature type="active site" description="Schiff-base intermediate with substrate; via pyruvic acid" evidence="1">
    <location>
        <position position="25"/>
    </location>
</feature>
<feature type="active site" description="Proton donor" evidence="1">
    <location>
        <position position="58"/>
    </location>
</feature>
<feature type="binding site" evidence="1">
    <location>
        <position position="57"/>
    </location>
    <ligand>
        <name>substrate</name>
    </ligand>
</feature>
<feature type="binding site" evidence="1">
    <location>
        <begin position="73"/>
        <end position="75"/>
    </location>
    <ligand>
        <name>substrate</name>
    </ligand>
</feature>
<feature type="modified residue" description="Pyruvic acid (Ser)" evidence="1">
    <location>
        <position position="25"/>
    </location>
</feature>
<keyword id="KW-0068">Autocatalytic cleavage</keyword>
<keyword id="KW-0963">Cytoplasm</keyword>
<keyword id="KW-0210">Decarboxylase</keyword>
<keyword id="KW-0456">Lyase</keyword>
<keyword id="KW-0566">Pantothenate biosynthesis</keyword>
<keyword id="KW-0670">Pyruvate</keyword>
<keyword id="KW-0704">Schiff base</keyword>
<keyword id="KW-0865">Zymogen</keyword>
<accession>P65663</accession>
<accession>Q8XGI4</accession>
<organism>
    <name type="scientific">Salmonella typhi</name>
    <dbReference type="NCBI Taxonomy" id="90370"/>
    <lineage>
        <taxon>Bacteria</taxon>
        <taxon>Pseudomonadati</taxon>
        <taxon>Pseudomonadota</taxon>
        <taxon>Gammaproteobacteria</taxon>
        <taxon>Enterobacterales</taxon>
        <taxon>Enterobacteriaceae</taxon>
        <taxon>Salmonella</taxon>
    </lineage>
</organism>
<reference key="1">
    <citation type="journal article" date="2001" name="Nature">
        <title>Complete genome sequence of a multiple drug resistant Salmonella enterica serovar Typhi CT18.</title>
        <authorList>
            <person name="Parkhill J."/>
            <person name="Dougan G."/>
            <person name="James K.D."/>
            <person name="Thomson N.R."/>
            <person name="Pickard D."/>
            <person name="Wain J."/>
            <person name="Churcher C.M."/>
            <person name="Mungall K.L."/>
            <person name="Bentley S.D."/>
            <person name="Holden M.T.G."/>
            <person name="Sebaihia M."/>
            <person name="Baker S."/>
            <person name="Basham D."/>
            <person name="Brooks K."/>
            <person name="Chillingworth T."/>
            <person name="Connerton P."/>
            <person name="Cronin A."/>
            <person name="Davis P."/>
            <person name="Davies R.M."/>
            <person name="Dowd L."/>
            <person name="White N."/>
            <person name="Farrar J."/>
            <person name="Feltwell T."/>
            <person name="Hamlin N."/>
            <person name="Haque A."/>
            <person name="Hien T.T."/>
            <person name="Holroyd S."/>
            <person name="Jagels K."/>
            <person name="Krogh A."/>
            <person name="Larsen T.S."/>
            <person name="Leather S."/>
            <person name="Moule S."/>
            <person name="O'Gaora P."/>
            <person name="Parry C."/>
            <person name="Quail M.A."/>
            <person name="Rutherford K.M."/>
            <person name="Simmonds M."/>
            <person name="Skelton J."/>
            <person name="Stevens K."/>
            <person name="Whitehead S."/>
            <person name="Barrell B.G."/>
        </authorList>
    </citation>
    <scope>NUCLEOTIDE SEQUENCE [LARGE SCALE GENOMIC DNA]</scope>
    <source>
        <strain>CT18</strain>
    </source>
</reference>
<reference key="2">
    <citation type="journal article" date="2003" name="J. Bacteriol.">
        <title>Comparative genomics of Salmonella enterica serovar Typhi strains Ty2 and CT18.</title>
        <authorList>
            <person name="Deng W."/>
            <person name="Liou S.-R."/>
            <person name="Plunkett G. III"/>
            <person name="Mayhew G.F."/>
            <person name="Rose D.J."/>
            <person name="Burland V."/>
            <person name="Kodoyianni V."/>
            <person name="Schwartz D.C."/>
            <person name="Blattner F.R."/>
        </authorList>
    </citation>
    <scope>NUCLEOTIDE SEQUENCE [LARGE SCALE GENOMIC DNA]</scope>
    <source>
        <strain>ATCC 700931 / Ty2</strain>
    </source>
</reference>
<evidence type="ECO:0000255" key="1">
    <source>
        <dbReference type="HAMAP-Rule" id="MF_00446"/>
    </source>
</evidence>
<sequence>MIRTMLQGKLHRVKVTQADLHYEGSCAIDQDFLDASGILENEAIDIWNVTNGKRFSTYAIAAERGSRIISVNGAAAHCAEVGDIVIIASFVTMSDEEARTWRPKVAYFEGDNEMKRTAKAIPVQVA</sequence>
<protein>
    <recommendedName>
        <fullName evidence="1">Aspartate 1-decarboxylase</fullName>
        <ecNumber evidence="1">4.1.1.11</ecNumber>
    </recommendedName>
    <alternativeName>
        <fullName evidence="1">Aspartate alpha-decarboxylase</fullName>
    </alternativeName>
    <component>
        <recommendedName>
            <fullName evidence="1">Aspartate 1-decarboxylase beta chain</fullName>
        </recommendedName>
    </component>
    <component>
        <recommendedName>
            <fullName evidence="1">Aspartate 1-decarboxylase alpha chain</fullName>
        </recommendedName>
    </component>
</protein>
<name>PAND_SALTI</name>
<comment type="function">
    <text evidence="1">Catalyzes the pyruvoyl-dependent decarboxylation of aspartate to produce beta-alanine.</text>
</comment>
<comment type="catalytic activity">
    <reaction evidence="1">
        <text>L-aspartate + H(+) = beta-alanine + CO2</text>
        <dbReference type="Rhea" id="RHEA:19497"/>
        <dbReference type="ChEBI" id="CHEBI:15378"/>
        <dbReference type="ChEBI" id="CHEBI:16526"/>
        <dbReference type="ChEBI" id="CHEBI:29991"/>
        <dbReference type="ChEBI" id="CHEBI:57966"/>
        <dbReference type="EC" id="4.1.1.11"/>
    </reaction>
</comment>
<comment type="cofactor">
    <cofactor evidence="1">
        <name>pyruvate</name>
        <dbReference type="ChEBI" id="CHEBI:15361"/>
    </cofactor>
    <text evidence="1">Binds 1 pyruvoyl group covalently per subunit.</text>
</comment>
<comment type="pathway">
    <text evidence="1">Cofactor biosynthesis; (R)-pantothenate biosynthesis; beta-alanine from L-aspartate: step 1/1.</text>
</comment>
<comment type="subunit">
    <text evidence="1">Heterooctamer of four alpha and four beta subunits.</text>
</comment>
<comment type="subcellular location">
    <subcellularLocation>
        <location evidence="1">Cytoplasm</location>
    </subcellularLocation>
</comment>
<comment type="PTM">
    <text evidence="1">Is synthesized initially as an inactive proenzyme, which is activated by self-cleavage at a specific serine bond to produce a beta-subunit with a hydroxyl group at its C-terminus and an alpha-subunit with a pyruvoyl group at its N-terminus.</text>
</comment>
<comment type="similarity">
    <text evidence="1">Belongs to the PanD family.</text>
</comment>
<dbReference type="EC" id="4.1.1.11" evidence="1"/>
<dbReference type="EMBL" id="AL513382">
    <property type="protein sequence ID" value="CAD01334.1"/>
    <property type="molecule type" value="Genomic_DNA"/>
</dbReference>
<dbReference type="EMBL" id="AE014613">
    <property type="protein sequence ID" value="AAO67913.1"/>
    <property type="molecule type" value="Genomic_DNA"/>
</dbReference>
<dbReference type="RefSeq" id="NP_454789.1">
    <property type="nucleotide sequence ID" value="NC_003198.1"/>
</dbReference>
<dbReference type="RefSeq" id="WP_000621526.1">
    <property type="nucleotide sequence ID" value="NZ_WSUR01000009.1"/>
</dbReference>
<dbReference type="SMR" id="P65663"/>
<dbReference type="STRING" id="220341.gene:17584236"/>
<dbReference type="GeneID" id="89550440"/>
<dbReference type="KEGG" id="stt:t0181"/>
<dbReference type="KEGG" id="sty:STY0198"/>
<dbReference type="PATRIC" id="fig|220341.7.peg.201"/>
<dbReference type="eggNOG" id="COG0853">
    <property type="taxonomic scope" value="Bacteria"/>
</dbReference>
<dbReference type="HOGENOM" id="CLU_115305_2_1_6"/>
<dbReference type="OMA" id="MLYSKIH"/>
<dbReference type="OrthoDB" id="9803983at2"/>
<dbReference type="UniPathway" id="UPA00028">
    <property type="reaction ID" value="UER00002"/>
</dbReference>
<dbReference type="Proteomes" id="UP000000541">
    <property type="component" value="Chromosome"/>
</dbReference>
<dbReference type="Proteomes" id="UP000002670">
    <property type="component" value="Chromosome"/>
</dbReference>
<dbReference type="GO" id="GO:0005829">
    <property type="term" value="C:cytosol"/>
    <property type="evidence" value="ECO:0007669"/>
    <property type="project" value="TreeGrafter"/>
</dbReference>
<dbReference type="GO" id="GO:0004068">
    <property type="term" value="F:aspartate 1-decarboxylase activity"/>
    <property type="evidence" value="ECO:0007669"/>
    <property type="project" value="UniProtKB-UniRule"/>
</dbReference>
<dbReference type="GO" id="GO:0006523">
    <property type="term" value="P:alanine biosynthetic process"/>
    <property type="evidence" value="ECO:0007669"/>
    <property type="project" value="InterPro"/>
</dbReference>
<dbReference type="GO" id="GO:0015940">
    <property type="term" value="P:pantothenate biosynthetic process"/>
    <property type="evidence" value="ECO:0007669"/>
    <property type="project" value="UniProtKB-UniRule"/>
</dbReference>
<dbReference type="CDD" id="cd06919">
    <property type="entry name" value="Asp_decarbox"/>
    <property type="match status" value="1"/>
</dbReference>
<dbReference type="FunFam" id="2.40.40.20:FF:000004">
    <property type="entry name" value="Aspartate 1-decarboxylase"/>
    <property type="match status" value="1"/>
</dbReference>
<dbReference type="Gene3D" id="2.40.40.20">
    <property type="match status" value="1"/>
</dbReference>
<dbReference type="HAMAP" id="MF_00446">
    <property type="entry name" value="PanD"/>
    <property type="match status" value="1"/>
</dbReference>
<dbReference type="InterPro" id="IPR009010">
    <property type="entry name" value="Asp_de-COase-like_dom_sf"/>
</dbReference>
<dbReference type="InterPro" id="IPR003190">
    <property type="entry name" value="Asp_decarbox"/>
</dbReference>
<dbReference type="NCBIfam" id="TIGR00223">
    <property type="entry name" value="panD"/>
    <property type="match status" value="1"/>
</dbReference>
<dbReference type="PANTHER" id="PTHR21012">
    <property type="entry name" value="ASPARTATE 1-DECARBOXYLASE"/>
    <property type="match status" value="1"/>
</dbReference>
<dbReference type="PANTHER" id="PTHR21012:SF0">
    <property type="entry name" value="ASPARTATE 1-DECARBOXYLASE"/>
    <property type="match status" value="1"/>
</dbReference>
<dbReference type="Pfam" id="PF02261">
    <property type="entry name" value="Asp_decarbox"/>
    <property type="match status" value="1"/>
</dbReference>
<dbReference type="PIRSF" id="PIRSF006246">
    <property type="entry name" value="Asp_decarbox"/>
    <property type="match status" value="1"/>
</dbReference>
<dbReference type="SUPFAM" id="SSF50692">
    <property type="entry name" value="ADC-like"/>
    <property type="match status" value="1"/>
</dbReference>
<proteinExistence type="inferred from homology"/>
<gene>
    <name evidence="1" type="primary">panD</name>
    <name type="ordered locus">STY0198</name>
    <name type="ordered locus">t0181</name>
</gene>